<protein>
    <recommendedName>
        <fullName>Chitin synthase 2</fullName>
        <ecNumber>2.4.1.16</ecNumber>
    </recommendedName>
    <alternativeName>
        <fullName>Chitin-UDP acetyl-glucosaminyl transferase 2</fullName>
    </alternativeName>
    <alternativeName>
        <fullName>Class-II chitin synthase 2</fullName>
    </alternativeName>
</protein>
<accession>P30582</accession>
<reference key="1">
    <citation type="journal article" date="1992" name="Proc. Natl. Acad. Sci. U.S.A.">
        <title>Classification of fungal chitin synthases.</title>
        <authorList>
            <person name="Bowen A.R."/>
            <person name="Chen-Wu J.L.-P."/>
            <person name="Momany M."/>
            <person name="Young R."/>
            <person name="Szaniszlo P.J."/>
            <person name="Robbins P.W."/>
        </authorList>
    </citation>
    <scope>NUCLEOTIDE SEQUENCE [GENOMIC DNA]</scope>
</reference>
<organism>
    <name type="scientific">Aspergillus niger</name>
    <dbReference type="NCBI Taxonomy" id="5061"/>
    <lineage>
        <taxon>Eukaryota</taxon>
        <taxon>Fungi</taxon>
        <taxon>Dikarya</taxon>
        <taxon>Ascomycota</taxon>
        <taxon>Pezizomycotina</taxon>
        <taxon>Eurotiomycetes</taxon>
        <taxon>Eurotiomycetidae</taxon>
        <taxon>Eurotiales</taxon>
        <taxon>Aspergillaceae</taxon>
        <taxon>Aspergillus</taxon>
        <taxon>Aspergillus subgen. Circumdati</taxon>
    </lineage>
</organism>
<feature type="chain" id="PRO_0000193684" description="Chitin synthase 2">
    <location>
        <begin position="1" status="less than"/>
        <end position="189" status="greater than"/>
    </location>
</feature>
<feature type="non-terminal residue">
    <location>
        <position position="1"/>
    </location>
</feature>
<feature type="non-terminal residue">
    <location>
        <position position="189"/>
    </location>
</feature>
<proteinExistence type="inferred from homology"/>
<evidence type="ECO:0000305" key="1"/>
<dbReference type="EC" id="2.4.1.16"/>
<dbReference type="EMBL" id="M82941">
    <property type="protein sequence ID" value="AAA33305.1"/>
    <property type="molecule type" value="Genomic_DNA"/>
</dbReference>
<dbReference type="PIR" id="D45188">
    <property type="entry name" value="D45188"/>
</dbReference>
<dbReference type="SMR" id="P30582"/>
<dbReference type="CAZy" id="GT2">
    <property type="family name" value="Glycosyltransferase Family 2"/>
</dbReference>
<dbReference type="PaxDb" id="5061-CADANGAP00010787"/>
<dbReference type="VEuPathDB" id="FungiDB:An14g00660"/>
<dbReference type="VEuPathDB" id="FungiDB:ASPNIDRAFT2_1115313"/>
<dbReference type="VEuPathDB" id="FungiDB:ATCC64974_680"/>
<dbReference type="VEuPathDB" id="FungiDB:M747DRAFT_8239"/>
<dbReference type="eggNOG" id="KOG2571">
    <property type="taxonomic scope" value="Eukaryota"/>
</dbReference>
<dbReference type="GO" id="GO:0030428">
    <property type="term" value="C:cell septum"/>
    <property type="evidence" value="ECO:0007669"/>
    <property type="project" value="TreeGrafter"/>
</dbReference>
<dbReference type="GO" id="GO:0005886">
    <property type="term" value="C:plasma membrane"/>
    <property type="evidence" value="ECO:0007669"/>
    <property type="project" value="UniProtKB-SubCell"/>
</dbReference>
<dbReference type="GO" id="GO:0004100">
    <property type="term" value="F:chitin synthase activity"/>
    <property type="evidence" value="ECO:0007669"/>
    <property type="project" value="UniProtKB-EC"/>
</dbReference>
<dbReference type="GO" id="GO:0071555">
    <property type="term" value="P:cell wall organization"/>
    <property type="evidence" value="ECO:0007669"/>
    <property type="project" value="UniProtKB-KW"/>
</dbReference>
<dbReference type="GO" id="GO:0006031">
    <property type="term" value="P:chitin biosynthetic process"/>
    <property type="evidence" value="ECO:0007669"/>
    <property type="project" value="InterPro"/>
</dbReference>
<dbReference type="InterPro" id="IPR004835">
    <property type="entry name" value="Chitin_synth"/>
</dbReference>
<dbReference type="InterPro" id="IPR004834">
    <property type="entry name" value="Chitin_synth_fun"/>
</dbReference>
<dbReference type="PANTHER" id="PTHR22914">
    <property type="entry name" value="CHITIN SYNTHASE"/>
    <property type="match status" value="1"/>
</dbReference>
<dbReference type="PANTHER" id="PTHR22914:SF38">
    <property type="entry name" value="CHITIN SYNTHASE 2"/>
    <property type="match status" value="1"/>
</dbReference>
<dbReference type="Pfam" id="PF01644">
    <property type="entry name" value="Chitin_synth_1"/>
    <property type="match status" value="1"/>
</dbReference>
<name>CHS2_ASPNG</name>
<sequence>EIGFTRTLHGVMQNITHLCSRSKSRTWGKDGWKKIVVCIIADGRKKVHPRTLNALAALGVYQEGIAKNVVNQKQVNAHVYEYTTQVSLDPDLKFKGAEKGIMPCQVLFCLKEHNKKKLNSHRWFFNAFGRALQPNICILLDVGTKPAPTALYHLWKAFDQNSNVAGAAGEIKAGKGKGMLGLLNPLVAS</sequence>
<comment type="function">
    <text evidence="1">Polymerizes chitin, a structural polymer of the cell wall and septum, by transferring the sugar moiety of UDP-GlcNAc to the non-reducing end of the growing chitin polymer.</text>
</comment>
<comment type="catalytic activity">
    <reaction>
        <text>[(1-&gt;4)-N-acetyl-beta-D-glucosaminyl](n) + UDP-N-acetyl-alpha-D-glucosamine = [(1-&gt;4)-N-acetyl-beta-D-glucosaminyl](n+1) + UDP + H(+)</text>
        <dbReference type="Rhea" id="RHEA:16637"/>
        <dbReference type="Rhea" id="RHEA-COMP:9593"/>
        <dbReference type="Rhea" id="RHEA-COMP:9595"/>
        <dbReference type="ChEBI" id="CHEBI:15378"/>
        <dbReference type="ChEBI" id="CHEBI:17029"/>
        <dbReference type="ChEBI" id="CHEBI:57705"/>
        <dbReference type="ChEBI" id="CHEBI:58223"/>
        <dbReference type="EC" id="2.4.1.16"/>
    </reaction>
</comment>
<comment type="subcellular location">
    <subcellularLocation>
        <location evidence="1">Cell membrane</location>
        <topology evidence="1">Multi-pass membrane protein</topology>
    </subcellularLocation>
</comment>
<comment type="similarity">
    <text evidence="1">Belongs to the chitin synthase family. Class II subfamily.</text>
</comment>
<gene>
    <name type="primary">chs2</name>
</gene>
<keyword id="KW-1003">Cell membrane</keyword>
<keyword id="KW-0961">Cell wall biogenesis/degradation</keyword>
<keyword id="KW-0328">Glycosyltransferase</keyword>
<keyword id="KW-0472">Membrane</keyword>
<keyword id="KW-0808">Transferase</keyword>
<keyword id="KW-0812">Transmembrane</keyword>